<protein>
    <recommendedName>
        <fullName evidence="1">Large ribosomal subunit protein bL20</fullName>
    </recommendedName>
    <alternativeName>
        <fullName evidence="2">50S ribosomal protein L20</fullName>
    </alternativeName>
</protein>
<sequence length="119" mass="13587">MARVKRAMNARKKHKKILKLSKGYFGGKSRLFKTANESVIRALRNAYTGRKLKKRDYRKLWIARINAATRANGLSYSRFMNGLKLAGIDMNRKMLSEIAINDPKAFSELVEAAKKQLNA</sequence>
<evidence type="ECO:0000255" key="1">
    <source>
        <dbReference type="HAMAP-Rule" id="MF_00382"/>
    </source>
</evidence>
<evidence type="ECO:0000305" key="2"/>
<dbReference type="EMBL" id="AE015927">
    <property type="protein sequence ID" value="AAO36763.1"/>
    <property type="molecule type" value="Genomic_DNA"/>
</dbReference>
<dbReference type="RefSeq" id="WP_011100424.1">
    <property type="nucleotide sequence ID" value="NC_004557.1"/>
</dbReference>
<dbReference type="SMR" id="Q891T2"/>
<dbReference type="STRING" id="212717.CTC_02283"/>
<dbReference type="GeneID" id="24253577"/>
<dbReference type="KEGG" id="ctc:CTC_02283"/>
<dbReference type="HOGENOM" id="CLU_123265_0_1_9"/>
<dbReference type="OrthoDB" id="9808966at2"/>
<dbReference type="Proteomes" id="UP000001412">
    <property type="component" value="Chromosome"/>
</dbReference>
<dbReference type="GO" id="GO:1990904">
    <property type="term" value="C:ribonucleoprotein complex"/>
    <property type="evidence" value="ECO:0007669"/>
    <property type="project" value="UniProtKB-KW"/>
</dbReference>
<dbReference type="GO" id="GO:0005840">
    <property type="term" value="C:ribosome"/>
    <property type="evidence" value="ECO:0007669"/>
    <property type="project" value="UniProtKB-KW"/>
</dbReference>
<dbReference type="GO" id="GO:0019843">
    <property type="term" value="F:rRNA binding"/>
    <property type="evidence" value="ECO:0007669"/>
    <property type="project" value="UniProtKB-UniRule"/>
</dbReference>
<dbReference type="GO" id="GO:0003735">
    <property type="term" value="F:structural constituent of ribosome"/>
    <property type="evidence" value="ECO:0007669"/>
    <property type="project" value="InterPro"/>
</dbReference>
<dbReference type="GO" id="GO:0000027">
    <property type="term" value="P:ribosomal large subunit assembly"/>
    <property type="evidence" value="ECO:0007669"/>
    <property type="project" value="UniProtKB-UniRule"/>
</dbReference>
<dbReference type="GO" id="GO:0006412">
    <property type="term" value="P:translation"/>
    <property type="evidence" value="ECO:0007669"/>
    <property type="project" value="InterPro"/>
</dbReference>
<dbReference type="CDD" id="cd07026">
    <property type="entry name" value="Ribosomal_L20"/>
    <property type="match status" value="1"/>
</dbReference>
<dbReference type="FunFam" id="1.10.1900.20:FF:000001">
    <property type="entry name" value="50S ribosomal protein L20"/>
    <property type="match status" value="1"/>
</dbReference>
<dbReference type="Gene3D" id="6.10.160.10">
    <property type="match status" value="1"/>
</dbReference>
<dbReference type="Gene3D" id="1.10.1900.20">
    <property type="entry name" value="Ribosomal protein L20"/>
    <property type="match status" value="1"/>
</dbReference>
<dbReference type="HAMAP" id="MF_00382">
    <property type="entry name" value="Ribosomal_bL20"/>
    <property type="match status" value="1"/>
</dbReference>
<dbReference type="InterPro" id="IPR005813">
    <property type="entry name" value="Ribosomal_bL20"/>
</dbReference>
<dbReference type="InterPro" id="IPR049946">
    <property type="entry name" value="RIBOSOMAL_L20_CS"/>
</dbReference>
<dbReference type="InterPro" id="IPR035566">
    <property type="entry name" value="Ribosomal_protein_bL20_C"/>
</dbReference>
<dbReference type="NCBIfam" id="TIGR01032">
    <property type="entry name" value="rplT_bact"/>
    <property type="match status" value="1"/>
</dbReference>
<dbReference type="PANTHER" id="PTHR10986">
    <property type="entry name" value="39S RIBOSOMAL PROTEIN L20"/>
    <property type="match status" value="1"/>
</dbReference>
<dbReference type="Pfam" id="PF00453">
    <property type="entry name" value="Ribosomal_L20"/>
    <property type="match status" value="1"/>
</dbReference>
<dbReference type="PRINTS" id="PR00062">
    <property type="entry name" value="RIBOSOMALL20"/>
</dbReference>
<dbReference type="SUPFAM" id="SSF74731">
    <property type="entry name" value="Ribosomal protein L20"/>
    <property type="match status" value="1"/>
</dbReference>
<dbReference type="PROSITE" id="PS00937">
    <property type="entry name" value="RIBOSOMAL_L20"/>
    <property type="match status" value="1"/>
</dbReference>
<keyword id="KW-1185">Reference proteome</keyword>
<keyword id="KW-0687">Ribonucleoprotein</keyword>
<keyword id="KW-0689">Ribosomal protein</keyword>
<keyword id="KW-0694">RNA-binding</keyword>
<keyword id="KW-0699">rRNA-binding</keyword>
<name>RL20_CLOTE</name>
<reference key="1">
    <citation type="journal article" date="2003" name="Proc. Natl. Acad. Sci. U.S.A.">
        <title>The genome sequence of Clostridium tetani, the causative agent of tetanus disease.</title>
        <authorList>
            <person name="Brueggemann H."/>
            <person name="Baeumer S."/>
            <person name="Fricke W.F."/>
            <person name="Wiezer A."/>
            <person name="Liesegang H."/>
            <person name="Decker I."/>
            <person name="Herzberg C."/>
            <person name="Martinez-Arias R."/>
            <person name="Merkl R."/>
            <person name="Henne A."/>
            <person name="Gottschalk G."/>
        </authorList>
    </citation>
    <scope>NUCLEOTIDE SEQUENCE [LARGE SCALE GENOMIC DNA]</scope>
    <source>
        <strain>Massachusetts / E88</strain>
    </source>
</reference>
<proteinExistence type="inferred from homology"/>
<gene>
    <name evidence="1" type="primary">rplT</name>
    <name type="ordered locus">CTC_02283</name>
</gene>
<organism>
    <name type="scientific">Clostridium tetani (strain Massachusetts / E88)</name>
    <dbReference type="NCBI Taxonomy" id="212717"/>
    <lineage>
        <taxon>Bacteria</taxon>
        <taxon>Bacillati</taxon>
        <taxon>Bacillota</taxon>
        <taxon>Clostridia</taxon>
        <taxon>Eubacteriales</taxon>
        <taxon>Clostridiaceae</taxon>
        <taxon>Clostridium</taxon>
    </lineage>
</organism>
<feature type="chain" id="PRO_0000177148" description="Large ribosomal subunit protein bL20">
    <location>
        <begin position="1"/>
        <end position="119"/>
    </location>
</feature>
<accession>Q891T2</accession>
<comment type="function">
    <text evidence="1">Binds directly to 23S ribosomal RNA and is necessary for the in vitro assembly process of the 50S ribosomal subunit. It is not involved in the protein synthesizing functions of that subunit.</text>
</comment>
<comment type="similarity">
    <text evidence="1">Belongs to the bacterial ribosomal protein bL20 family.</text>
</comment>